<sequence length="292" mass="33190">MNAFDPDIAEDAGSDGCHPLFRDVPTTVEFNKLRKRLLRLTRQAIEDFSMVKPGERWMVCLSGGKDSYGLLALLLDLKWRGLLPVELLAVNLDQGQPNFPKHILPDFLNRYEIEHRIEYQDTYSIVTDKLPETSTYCSLCSRLRRGNLYRIAREEGCSAIVLGHHREDILETFFMNLFHGGRLAAMPPKLLNDEGDLMVFRPLAYAAEDDLEKFATAMQFPIIPCDLCGSQEGLQRNAMKAMLTDIEKRMPGRKDTMIRAMTNVRPSHLLDRKLFDFAGLMLNGEGEGDHAV</sequence>
<gene>
    <name evidence="1" type="primary">ttcA</name>
    <name type="ordered locus">Oant_2394</name>
</gene>
<accession>A6X1K4</accession>
<name>TTCA_BRUA4</name>
<proteinExistence type="inferred from homology"/>
<dbReference type="EC" id="2.8.1.-" evidence="1"/>
<dbReference type="EMBL" id="CP000758">
    <property type="protein sequence ID" value="ABS15108.1"/>
    <property type="molecule type" value="Genomic_DNA"/>
</dbReference>
<dbReference type="RefSeq" id="WP_012092244.1">
    <property type="nucleotide sequence ID" value="NC_009667.1"/>
</dbReference>
<dbReference type="SMR" id="A6X1K4"/>
<dbReference type="STRING" id="439375.Oant_2394"/>
<dbReference type="KEGG" id="oan:Oant_2394"/>
<dbReference type="eggNOG" id="COG0037">
    <property type="taxonomic scope" value="Bacteria"/>
</dbReference>
<dbReference type="HOGENOM" id="CLU_026481_0_0_5"/>
<dbReference type="PhylomeDB" id="A6X1K4"/>
<dbReference type="Proteomes" id="UP000002301">
    <property type="component" value="Chromosome 1"/>
</dbReference>
<dbReference type="GO" id="GO:0005737">
    <property type="term" value="C:cytoplasm"/>
    <property type="evidence" value="ECO:0007669"/>
    <property type="project" value="UniProtKB-SubCell"/>
</dbReference>
<dbReference type="GO" id="GO:0051539">
    <property type="term" value="F:4 iron, 4 sulfur cluster binding"/>
    <property type="evidence" value="ECO:0007669"/>
    <property type="project" value="UniProtKB-UniRule"/>
</dbReference>
<dbReference type="GO" id="GO:0005524">
    <property type="term" value="F:ATP binding"/>
    <property type="evidence" value="ECO:0007669"/>
    <property type="project" value="UniProtKB-UniRule"/>
</dbReference>
<dbReference type="GO" id="GO:0000287">
    <property type="term" value="F:magnesium ion binding"/>
    <property type="evidence" value="ECO:0007669"/>
    <property type="project" value="UniProtKB-UniRule"/>
</dbReference>
<dbReference type="GO" id="GO:0016783">
    <property type="term" value="F:sulfurtransferase activity"/>
    <property type="evidence" value="ECO:0007669"/>
    <property type="project" value="UniProtKB-UniRule"/>
</dbReference>
<dbReference type="GO" id="GO:0000049">
    <property type="term" value="F:tRNA binding"/>
    <property type="evidence" value="ECO:0007669"/>
    <property type="project" value="UniProtKB-KW"/>
</dbReference>
<dbReference type="GO" id="GO:0034227">
    <property type="term" value="P:tRNA thio-modification"/>
    <property type="evidence" value="ECO:0007669"/>
    <property type="project" value="UniProtKB-UniRule"/>
</dbReference>
<dbReference type="CDD" id="cd24138">
    <property type="entry name" value="TtcA-like"/>
    <property type="match status" value="1"/>
</dbReference>
<dbReference type="Gene3D" id="3.40.50.620">
    <property type="entry name" value="HUPs"/>
    <property type="match status" value="1"/>
</dbReference>
<dbReference type="HAMAP" id="MF_01850">
    <property type="entry name" value="TtcA"/>
    <property type="match status" value="1"/>
</dbReference>
<dbReference type="InterPro" id="IPR014729">
    <property type="entry name" value="Rossmann-like_a/b/a_fold"/>
</dbReference>
<dbReference type="InterPro" id="IPR011063">
    <property type="entry name" value="TilS/TtcA_N"/>
</dbReference>
<dbReference type="InterPro" id="IPR012089">
    <property type="entry name" value="tRNA_Cyd_32_2_STrfase"/>
</dbReference>
<dbReference type="InterPro" id="IPR035107">
    <property type="entry name" value="tRNA_thiolation_TtcA_Ctu1"/>
</dbReference>
<dbReference type="NCBIfam" id="NF007972">
    <property type="entry name" value="PRK10696.1"/>
    <property type="match status" value="1"/>
</dbReference>
<dbReference type="PANTHER" id="PTHR43686:SF1">
    <property type="entry name" value="AMINOTRAN_5 DOMAIN-CONTAINING PROTEIN"/>
    <property type="match status" value="1"/>
</dbReference>
<dbReference type="PANTHER" id="PTHR43686">
    <property type="entry name" value="SULFURTRANSFERASE-RELATED"/>
    <property type="match status" value="1"/>
</dbReference>
<dbReference type="Pfam" id="PF01171">
    <property type="entry name" value="ATP_bind_3"/>
    <property type="match status" value="1"/>
</dbReference>
<dbReference type="PIRSF" id="PIRSF004976">
    <property type="entry name" value="ATPase_YdaO"/>
    <property type="match status" value="1"/>
</dbReference>
<dbReference type="SUPFAM" id="SSF52402">
    <property type="entry name" value="Adenine nucleotide alpha hydrolases-like"/>
    <property type="match status" value="1"/>
</dbReference>
<organism>
    <name type="scientific">Brucella anthropi (strain ATCC 49188 / DSM 6882 / CCUG 24695 / JCM 21032 / LMG 3331 / NBRC 15819 / NCTC 12168 / Alc 37)</name>
    <name type="common">Ochrobactrum anthropi</name>
    <dbReference type="NCBI Taxonomy" id="439375"/>
    <lineage>
        <taxon>Bacteria</taxon>
        <taxon>Pseudomonadati</taxon>
        <taxon>Pseudomonadota</taxon>
        <taxon>Alphaproteobacteria</taxon>
        <taxon>Hyphomicrobiales</taxon>
        <taxon>Brucellaceae</taxon>
        <taxon>Brucella/Ochrobactrum group</taxon>
        <taxon>Brucella</taxon>
    </lineage>
</organism>
<evidence type="ECO:0000255" key="1">
    <source>
        <dbReference type="HAMAP-Rule" id="MF_01850"/>
    </source>
</evidence>
<feature type="chain" id="PRO_0000348779" description="tRNA-cytidine(32) 2-sulfurtransferase">
    <location>
        <begin position="1"/>
        <end position="292"/>
    </location>
</feature>
<feature type="short sequence motif" description="PP-loop motif" evidence="1">
    <location>
        <begin position="62"/>
        <end position="67"/>
    </location>
</feature>
<feature type="binding site" evidence="1">
    <location>
        <position position="137"/>
    </location>
    <ligand>
        <name>[4Fe-4S] cluster</name>
        <dbReference type="ChEBI" id="CHEBI:49883"/>
    </ligand>
</feature>
<feature type="binding site" evidence="1">
    <location>
        <position position="140"/>
    </location>
    <ligand>
        <name>[4Fe-4S] cluster</name>
        <dbReference type="ChEBI" id="CHEBI:49883"/>
    </ligand>
</feature>
<feature type="binding site" evidence="1">
    <location>
        <position position="228"/>
    </location>
    <ligand>
        <name>[4Fe-4S] cluster</name>
        <dbReference type="ChEBI" id="CHEBI:49883"/>
    </ligand>
</feature>
<reference key="1">
    <citation type="journal article" date="2011" name="J. Bacteriol.">
        <title>Genome of Ochrobactrum anthropi ATCC 49188 T, a versatile opportunistic pathogen and symbiont of several eukaryotic hosts.</title>
        <authorList>
            <person name="Chain P.S."/>
            <person name="Lang D.M."/>
            <person name="Comerci D.J."/>
            <person name="Malfatti S.A."/>
            <person name="Vergez L.M."/>
            <person name="Shin M."/>
            <person name="Ugalde R.A."/>
            <person name="Garcia E."/>
            <person name="Tolmasky M.E."/>
        </authorList>
    </citation>
    <scope>NUCLEOTIDE SEQUENCE [LARGE SCALE GENOMIC DNA]</scope>
    <source>
        <strain>ATCC 49188 / DSM 6882 / CCUG 24695 / JCM 21032 / LMG 3331 / NBRC 15819 / NCTC 12168 / Alc 37</strain>
    </source>
</reference>
<keyword id="KW-0004">4Fe-4S</keyword>
<keyword id="KW-0067">ATP-binding</keyword>
<keyword id="KW-0963">Cytoplasm</keyword>
<keyword id="KW-0408">Iron</keyword>
<keyword id="KW-0411">Iron-sulfur</keyword>
<keyword id="KW-0460">Magnesium</keyword>
<keyword id="KW-0479">Metal-binding</keyword>
<keyword id="KW-0547">Nucleotide-binding</keyword>
<keyword id="KW-1185">Reference proteome</keyword>
<keyword id="KW-0694">RNA-binding</keyword>
<keyword id="KW-0808">Transferase</keyword>
<keyword id="KW-0819">tRNA processing</keyword>
<keyword id="KW-0820">tRNA-binding</keyword>
<comment type="function">
    <text evidence="1">Catalyzes the ATP-dependent 2-thiolation of cytidine in position 32 of tRNA, to form 2-thiocytidine (s(2)C32). The sulfur atoms are provided by the cysteine/cysteine desulfurase (IscS) system.</text>
</comment>
<comment type="catalytic activity">
    <reaction evidence="1">
        <text>cytidine(32) in tRNA + S-sulfanyl-L-cysteinyl-[cysteine desulfurase] + AH2 + ATP = 2-thiocytidine(32) in tRNA + L-cysteinyl-[cysteine desulfurase] + A + AMP + diphosphate + H(+)</text>
        <dbReference type="Rhea" id="RHEA:57048"/>
        <dbReference type="Rhea" id="RHEA-COMP:10288"/>
        <dbReference type="Rhea" id="RHEA-COMP:12157"/>
        <dbReference type="Rhea" id="RHEA-COMP:12158"/>
        <dbReference type="Rhea" id="RHEA-COMP:14821"/>
        <dbReference type="ChEBI" id="CHEBI:13193"/>
        <dbReference type="ChEBI" id="CHEBI:15378"/>
        <dbReference type="ChEBI" id="CHEBI:17499"/>
        <dbReference type="ChEBI" id="CHEBI:29950"/>
        <dbReference type="ChEBI" id="CHEBI:30616"/>
        <dbReference type="ChEBI" id="CHEBI:33019"/>
        <dbReference type="ChEBI" id="CHEBI:61963"/>
        <dbReference type="ChEBI" id="CHEBI:82748"/>
        <dbReference type="ChEBI" id="CHEBI:141453"/>
        <dbReference type="ChEBI" id="CHEBI:456215"/>
    </reaction>
    <physiologicalReaction direction="left-to-right" evidence="1">
        <dbReference type="Rhea" id="RHEA:57049"/>
    </physiologicalReaction>
</comment>
<comment type="cofactor">
    <cofactor evidence="1">
        <name>Mg(2+)</name>
        <dbReference type="ChEBI" id="CHEBI:18420"/>
    </cofactor>
</comment>
<comment type="cofactor">
    <cofactor evidence="1">
        <name>[4Fe-4S] cluster</name>
        <dbReference type="ChEBI" id="CHEBI:49883"/>
    </cofactor>
    <text evidence="1">Binds 1 [4Fe-4S] cluster per subunit. The cluster is chelated by three Cys residues, the fourth Fe has a free coordination site that may bind a sulfur atom transferred from the persulfide of IscS.</text>
</comment>
<comment type="pathway">
    <text evidence="1">tRNA modification.</text>
</comment>
<comment type="subunit">
    <text evidence="1">Homodimer.</text>
</comment>
<comment type="subcellular location">
    <subcellularLocation>
        <location evidence="1">Cytoplasm</location>
    </subcellularLocation>
</comment>
<comment type="miscellaneous">
    <text evidence="1">The thiolation reaction likely consists of two steps: a first activation step by ATP to form an adenylated intermediate of the target base of tRNA, and a second nucleophilic substitution step of the sulfur (S) atom supplied by the hydrosulfide attached to the Fe-S cluster.</text>
</comment>
<comment type="similarity">
    <text evidence="1">Belongs to the TtcA family.</text>
</comment>
<protein>
    <recommendedName>
        <fullName evidence="1">tRNA-cytidine(32) 2-sulfurtransferase</fullName>
        <ecNumber evidence="1">2.8.1.-</ecNumber>
    </recommendedName>
    <alternativeName>
        <fullName evidence="1">Two-thiocytidine biosynthesis protein A</fullName>
    </alternativeName>
    <alternativeName>
        <fullName evidence="1">tRNA 2-thiocytidine biosynthesis protein TtcA</fullName>
    </alternativeName>
</protein>